<dbReference type="EC" id="2.1.1.189" evidence="1"/>
<dbReference type="EMBL" id="CP000886">
    <property type="protein sequence ID" value="ABX67986.1"/>
    <property type="molecule type" value="Genomic_DNA"/>
</dbReference>
<dbReference type="RefSeq" id="WP_001149779.1">
    <property type="nucleotide sequence ID" value="NC_010102.1"/>
</dbReference>
<dbReference type="SMR" id="A9N824"/>
<dbReference type="KEGG" id="spq:SPAB_02607"/>
<dbReference type="PATRIC" id="fig|1016998.12.peg.2466"/>
<dbReference type="HOGENOM" id="CLU_014689_0_0_6"/>
<dbReference type="BioCyc" id="SENT1016998:SPAB_RS10605-MONOMER"/>
<dbReference type="Proteomes" id="UP000008556">
    <property type="component" value="Chromosome"/>
</dbReference>
<dbReference type="GO" id="GO:0051539">
    <property type="term" value="F:4 iron, 4 sulfur cluster binding"/>
    <property type="evidence" value="ECO:0007669"/>
    <property type="project" value="UniProtKB-KW"/>
</dbReference>
<dbReference type="GO" id="GO:0005506">
    <property type="term" value="F:iron ion binding"/>
    <property type="evidence" value="ECO:0007669"/>
    <property type="project" value="UniProtKB-UniRule"/>
</dbReference>
<dbReference type="GO" id="GO:0070041">
    <property type="term" value="F:rRNA (uridine-C5-)-methyltransferase activity"/>
    <property type="evidence" value="ECO:0007669"/>
    <property type="project" value="UniProtKB-UniRule"/>
</dbReference>
<dbReference type="GO" id="GO:0070475">
    <property type="term" value="P:rRNA base methylation"/>
    <property type="evidence" value="ECO:0007669"/>
    <property type="project" value="TreeGrafter"/>
</dbReference>
<dbReference type="CDD" id="cd02440">
    <property type="entry name" value="AdoMet_MTases"/>
    <property type="match status" value="1"/>
</dbReference>
<dbReference type="FunFam" id="2.40.50.1070:FF:000002">
    <property type="entry name" value="23S rRNA (uracil(747)-C(5))-methyltransferase RlmC"/>
    <property type="match status" value="1"/>
</dbReference>
<dbReference type="FunFam" id="3.40.50.150:FF:000049">
    <property type="entry name" value="23S rRNA (uracil(747)-C(5))-methyltransferase RlmC"/>
    <property type="match status" value="1"/>
</dbReference>
<dbReference type="Gene3D" id="2.40.50.1070">
    <property type="match status" value="1"/>
</dbReference>
<dbReference type="Gene3D" id="3.40.50.150">
    <property type="entry name" value="Vaccinia Virus protein VP39"/>
    <property type="match status" value="1"/>
</dbReference>
<dbReference type="HAMAP" id="MF_01012">
    <property type="entry name" value="23SrRNA_methyltr_RlmC"/>
    <property type="match status" value="1"/>
</dbReference>
<dbReference type="InterPro" id="IPR011825">
    <property type="entry name" value="23SrRNA_MeTrfase_RlmC"/>
</dbReference>
<dbReference type="InterPro" id="IPR030390">
    <property type="entry name" value="MeTrfase_TrmA_AS"/>
</dbReference>
<dbReference type="InterPro" id="IPR030391">
    <property type="entry name" value="MeTrfase_TrmA_CS"/>
</dbReference>
<dbReference type="InterPro" id="IPR029063">
    <property type="entry name" value="SAM-dependent_MTases_sf"/>
</dbReference>
<dbReference type="InterPro" id="IPR010280">
    <property type="entry name" value="U5_MeTrfase_fam"/>
</dbReference>
<dbReference type="NCBIfam" id="TIGR02085">
    <property type="entry name" value="meth_trns_rumB"/>
    <property type="match status" value="1"/>
</dbReference>
<dbReference type="PANTHER" id="PTHR11061">
    <property type="entry name" value="RNA M5U METHYLTRANSFERASE"/>
    <property type="match status" value="1"/>
</dbReference>
<dbReference type="PANTHER" id="PTHR11061:SF30">
    <property type="entry name" value="TRNA (URACIL(54)-C(5))-METHYLTRANSFERASE"/>
    <property type="match status" value="1"/>
</dbReference>
<dbReference type="Pfam" id="PF05958">
    <property type="entry name" value="tRNA_U5-meth_tr"/>
    <property type="match status" value="1"/>
</dbReference>
<dbReference type="SUPFAM" id="SSF53335">
    <property type="entry name" value="S-adenosyl-L-methionine-dependent methyltransferases"/>
    <property type="match status" value="1"/>
</dbReference>
<dbReference type="PROSITE" id="PS51687">
    <property type="entry name" value="SAM_MT_RNA_M5U"/>
    <property type="match status" value="1"/>
</dbReference>
<dbReference type="PROSITE" id="PS01230">
    <property type="entry name" value="TRMA_1"/>
    <property type="match status" value="1"/>
</dbReference>
<dbReference type="PROSITE" id="PS01231">
    <property type="entry name" value="TRMA_2"/>
    <property type="match status" value="1"/>
</dbReference>
<reference key="1">
    <citation type="submission" date="2007-11" db="EMBL/GenBank/DDBJ databases">
        <authorList>
            <consortium name="The Salmonella enterica serovar Paratyphi B Genome Sequencing Project"/>
            <person name="McClelland M."/>
            <person name="Sanderson E.K."/>
            <person name="Porwollik S."/>
            <person name="Spieth J."/>
            <person name="Clifton W.S."/>
            <person name="Fulton R."/>
            <person name="Cordes M."/>
            <person name="Wollam A."/>
            <person name="Shah N."/>
            <person name="Pepin K."/>
            <person name="Bhonagiri V."/>
            <person name="Nash W."/>
            <person name="Johnson M."/>
            <person name="Thiruvilangam P."/>
            <person name="Wilson R."/>
        </authorList>
    </citation>
    <scope>NUCLEOTIDE SEQUENCE [LARGE SCALE GENOMIC DNA]</scope>
    <source>
        <strain>ATCC BAA-1250 / SPB7</strain>
    </source>
</reference>
<sequence>MQCALYDAGRCRSCQWITQSVNEQLSAKTADLHRLLAGLPVEQWCAPIGGPEQHFRNKAKMVVSGSVEKPLFGMLHRDGTPVDLCGCPLYPASFAPVFSALKPFIARAGLTPYNVARKRGELKYLLLTESQFDGGMMLRFVLRSETKLTQLRAALPWLRAQLPQLRVITANIQPVHMAIMEGETEIYLTDQQALVERFNDVPLWIRPQSFFQTNPTVASRLYATARDWVGQLPVRHMWDLFCGVGGFGLHCATPQMQLTGIEIAPEAIACAKQSAAELGLTRLHFQALDSTQFAIAQGETPDLVLVNPPRRGIGKPLCDYLAQMAPRFIIYSSCNAQTMAQDIRHLPNYRIQRVQLFDMFPHTAHYEVLALLRRSI</sequence>
<keyword id="KW-0004">4Fe-4S</keyword>
<keyword id="KW-0408">Iron</keyword>
<keyword id="KW-0411">Iron-sulfur</keyword>
<keyword id="KW-0479">Metal-binding</keyword>
<keyword id="KW-0489">Methyltransferase</keyword>
<keyword id="KW-0698">rRNA processing</keyword>
<keyword id="KW-0949">S-adenosyl-L-methionine</keyword>
<keyword id="KW-0808">Transferase</keyword>
<protein>
    <recommendedName>
        <fullName evidence="1">23S rRNA (uracil(747)-C(5))-methyltransferase RlmC</fullName>
        <ecNumber evidence="1">2.1.1.189</ecNumber>
    </recommendedName>
    <alternativeName>
        <fullName evidence="1">23S rRNA(m5U747)-methyltransferase</fullName>
    </alternativeName>
</protein>
<comment type="function">
    <text evidence="1">Catalyzes the formation of 5-methyl-uridine at position 747 (m5U747) in 23S rRNA.</text>
</comment>
<comment type="catalytic activity">
    <reaction evidence="1">
        <text>uridine(747) in 23S rRNA + S-adenosyl-L-methionine = 5-methyluridine(747) in 23S rRNA + S-adenosyl-L-homocysteine + H(+)</text>
        <dbReference type="Rhea" id="RHEA:42628"/>
        <dbReference type="Rhea" id="RHEA-COMP:10154"/>
        <dbReference type="Rhea" id="RHEA-COMP:10155"/>
        <dbReference type="ChEBI" id="CHEBI:15378"/>
        <dbReference type="ChEBI" id="CHEBI:57856"/>
        <dbReference type="ChEBI" id="CHEBI:59789"/>
        <dbReference type="ChEBI" id="CHEBI:65315"/>
        <dbReference type="ChEBI" id="CHEBI:74447"/>
        <dbReference type="EC" id="2.1.1.189"/>
    </reaction>
</comment>
<comment type="similarity">
    <text evidence="1">Belongs to the class I-like SAM-binding methyltransferase superfamily. RNA M5U methyltransferase family. RlmC subfamily.</text>
</comment>
<organism>
    <name type="scientific">Salmonella paratyphi B (strain ATCC BAA-1250 / SPB7)</name>
    <dbReference type="NCBI Taxonomy" id="1016998"/>
    <lineage>
        <taxon>Bacteria</taxon>
        <taxon>Pseudomonadati</taxon>
        <taxon>Pseudomonadota</taxon>
        <taxon>Gammaproteobacteria</taxon>
        <taxon>Enterobacterales</taxon>
        <taxon>Enterobacteriaceae</taxon>
        <taxon>Salmonella</taxon>
    </lineage>
</organism>
<evidence type="ECO:0000255" key="1">
    <source>
        <dbReference type="HAMAP-Rule" id="MF_01012"/>
    </source>
</evidence>
<feature type="chain" id="PRO_1000084047" description="23S rRNA (uracil(747)-C(5))-methyltransferase RlmC">
    <location>
        <begin position="1"/>
        <end position="376"/>
    </location>
</feature>
<feature type="active site" description="Nucleophile" evidence="1">
    <location>
        <position position="334"/>
    </location>
</feature>
<feature type="binding site" evidence="1">
    <location>
        <position position="3"/>
    </location>
    <ligand>
        <name>[4Fe-4S] cluster</name>
        <dbReference type="ChEBI" id="CHEBI:49883"/>
    </ligand>
</feature>
<feature type="binding site" evidence="1">
    <location>
        <position position="11"/>
    </location>
    <ligand>
        <name>[4Fe-4S] cluster</name>
        <dbReference type="ChEBI" id="CHEBI:49883"/>
    </ligand>
</feature>
<feature type="binding site" evidence="1">
    <location>
        <position position="14"/>
    </location>
    <ligand>
        <name>[4Fe-4S] cluster</name>
        <dbReference type="ChEBI" id="CHEBI:49883"/>
    </ligand>
</feature>
<feature type="binding site" evidence="1">
    <location>
        <position position="87"/>
    </location>
    <ligand>
        <name>[4Fe-4S] cluster</name>
        <dbReference type="ChEBI" id="CHEBI:49883"/>
    </ligand>
</feature>
<feature type="binding site" evidence="1">
    <location>
        <position position="212"/>
    </location>
    <ligand>
        <name>S-adenosyl-L-methionine</name>
        <dbReference type="ChEBI" id="CHEBI:59789"/>
    </ligand>
</feature>
<feature type="binding site" evidence="1">
    <location>
        <position position="241"/>
    </location>
    <ligand>
        <name>S-adenosyl-L-methionine</name>
        <dbReference type="ChEBI" id="CHEBI:59789"/>
    </ligand>
</feature>
<feature type="binding site" evidence="1">
    <location>
        <position position="262"/>
    </location>
    <ligand>
        <name>S-adenosyl-L-methionine</name>
        <dbReference type="ChEBI" id="CHEBI:59789"/>
    </ligand>
</feature>
<feature type="binding site" evidence="1">
    <location>
        <position position="307"/>
    </location>
    <ligand>
        <name>S-adenosyl-L-methionine</name>
        <dbReference type="ChEBI" id="CHEBI:59789"/>
    </ligand>
</feature>
<gene>
    <name evidence="1" type="primary">rlmC</name>
    <name type="synonym">rumB</name>
    <name type="ordered locus">SPAB_02607</name>
</gene>
<accession>A9N824</accession>
<name>RLMC_SALPB</name>
<proteinExistence type="inferred from homology"/>